<organism>
    <name type="scientific">Equus caballus</name>
    <name type="common">Horse</name>
    <dbReference type="NCBI Taxonomy" id="9796"/>
    <lineage>
        <taxon>Eukaryota</taxon>
        <taxon>Metazoa</taxon>
        <taxon>Chordata</taxon>
        <taxon>Craniata</taxon>
        <taxon>Vertebrata</taxon>
        <taxon>Euteleostomi</taxon>
        <taxon>Mammalia</taxon>
        <taxon>Eutheria</taxon>
        <taxon>Laurasiatheria</taxon>
        <taxon>Perissodactyla</taxon>
        <taxon>Equidae</taxon>
        <taxon>Equus</taxon>
    </lineage>
</organism>
<accession>P80930</accession>
<sequence length="46" mass="4891">DVQCGEGHFCHDXQTCCRASQGGXACCPYSQGVCCADQRHCCPVGF</sequence>
<keyword id="KW-0044">Antibiotic</keyword>
<keyword id="KW-0929">Antimicrobial</keyword>
<keyword id="KW-0903">Direct protein sequencing</keyword>
<keyword id="KW-1015">Disulfide bond</keyword>
<keyword id="KW-1185">Reference proteome</keyword>
<keyword id="KW-0964">Secreted</keyword>
<evidence type="ECO:0000250" key="1"/>
<evidence type="ECO:0000305" key="2"/>
<name>ENA1_HORSE</name>
<comment type="function">
    <text>Has antimicrobial activity against Gram-negative and Gram-positive bacteria.</text>
</comment>
<comment type="subcellular location">
    <subcellularLocation>
        <location>Secreted</location>
    </subcellularLocation>
</comment>
<comment type="similarity">
    <text evidence="2">Belongs to the granulin family.</text>
</comment>
<dbReference type="PIR" id="A44794">
    <property type="entry name" value="A44794"/>
</dbReference>
<dbReference type="STRING" id="9796.ENSECAP00000016112"/>
<dbReference type="PaxDb" id="9796-ENSECAP00000016112"/>
<dbReference type="InParanoid" id="P80930"/>
<dbReference type="Proteomes" id="UP000002281">
    <property type="component" value="Unplaced"/>
</dbReference>
<dbReference type="GO" id="GO:0005576">
    <property type="term" value="C:extracellular region"/>
    <property type="evidence" value="ECO:0007669"/>
    <property type="project" value="UniProtKB-SubCell"/>
</dbReference>
<dbReference type="GO" id="GO:0042742">
    <property type="term" value="P:defense response to bacterium"/>
    <property type="evidence" value="ECO:0007669"/>
    <property type="project" value="UniProtKB-KW"/>
</dbReference>
<dbReference type="Gene3D" id="2.10.25.160">
    <property type="entry name" value="Granulin"/>
    <property type="match status" value="1"/>
</dbReference>
<dbReference type="InterPro" id="IPR000118">
    <property type="entry name" value="Granulin"/>
</dbReference>
<dbReference type="InterPro" id="IPR039036">
    <property type="entry name" value="Granulin_fam"/>
</dbReference>
<dbReference type="InterPro" id="IPR037277">
    <property type="entry name" value="Granulin_sf"/>
</dbReference>
<dbReference type="PANTHER" id="PTHR12274">
    <property type="entry name" value="GRANULIN"/>
    <property type="match status" value="1"/>
</dbReference>
<dbReference type="PANTHER" id="PTHR12274:SF3">
    <property type="entry name" value="PROGRANULIN"/>
    <property type="match status" value="1"/>
</dbReference>
<dbReference type="Pfam" id="PF00396">
    <property type="entry name" value="Granulin"/>
    <property type="match status" value="1"/>
</dbReference>
<dbReference type="SMART" id="SM00277">
    <property type="entry name" value="GRAN"/>
    <property type="match status" value="1"/>
</dbReference>
<dbReference type="SUPFAM" id="SSF57277">
    <property type="entry name" value="Granulin repeat"/>
    <property type="match status" value="1"/>
</dbReference>
<feature type="chain" id="PRO_0000150133" description="Antimicrobial peptide eNAP-1">
    <location>
        <begin position="1"/>
        <end position="46" status="greater than"/>
    </location>
</feature>
<feature type="disulfide bond" evidence="1">
    <location>
        <begin position="4"/>
        <end position="16"/>
    </location>
</feature>
<feature type="disulfide bond" evidence="1">
    <location>
        <begin position="10"/>
        <end position="26"/>
    </location>
</feature>
<feature type="non-terminal residue">
    <location>
        <position position="46"/>
    </location>
</feature>
<protein>
    <recommendedName>
        <fullName>Antimicrobial peptide eNAP-1</fullName>
    </recommendedName>
</protein>
<proteinExistence type="evidence at protein level"/>
<reference key="1">
    <citation type="journal article" date="1992" name="Infect. Immun.">
        <title>Identification of eNAP-1, an antimicrobial peptide from equine neutrophils.</title>
        <authorList>
            <person name="Couto A.M."/>
            <person name="Harwig S.S.L."/>
            <person name="Cullor J.S."/>
            <person name="Hughes J.P."/>
            <person name="Lehrer R.I."/>
        </authorList>
    </citation>
    <scope>PROTEIN SEQUENCE</scope>
    <source>
        <tissue>Neutrophil</tissue>
    </source>
</reference>